<reference key="1">
    <citation type="journal article" date="2007" name="Nat. Biotechnol.">
        <title>Genome sequencing and analysis of the versatile cell factory Aspergillus niger CBS 513.88.</title>
        <authorList>
            <person name="Pel H.J."/>
            <person name="de Winde J.H."/>
            <person name="Archer D.B."/>
            <person name="Dyer P.S."/>
            <person name="Hofmann G."/>
            <person name="Schaap P.J."/>
            <person name="Turner G."/>
            <person name="de Vries R.P."/>
            <person name="Albang R."/>
            <person name="Albermann K."/>
            <person name="Andersen M.R."/>
            <person name="Bendtsen J.D."/>
            <person name="Benen J.A.E."/>
            <person name="van den Berg M."/>
            <person name="Breestraat S."/>
            <person name="Caddick M.X."/>
            <person name="Contreras R."/>
            <person name="Cornell M."/>
            <person name="Coutinho P.M."/>
            <person name="Danchin E.G.J."/>
            <person name="Debets A.J.M."/>
            <person name="Dekker P."/>
            <person name="van Dijck P.W.M."/>
            <person name="van Dijk A."/>
            <person name="Dijkhuizen L."/>
            <person name="Driessen A.J.M."/>
            <person name="d'Enfert C."/>
            <person name="Geysens S."/>
            <person name="Goosen C."/>
            <person name="Groot G.S.P."/>
            <person name="de Groot P.W.J."/>
            <person name="Guillemette T."/>
            <person name="Henrissat B."/>
            <person name="Herweijer M."/>
            <person name="van den Hombergh J.P.T.W."/>
            <person name="van den Hondel C.A.M.J.J."/>
            <person name="van der Heijden R.T.J.M."/>
            <person name="van der Kaaij R.M."/>
            <person name="Klis F.M."/>
            <person name="Kools H.J."/>
            <person name="Kubicek C.P."/>
            <person name="van Kuyk P.A."/>
            <person name="Lauber J."/>
            <person name="Lu X."/>
            <person name="van der Maarel M.J.E.C."/>
            <person name="Meulenberg R."/>
            <person name="Menke H."/>
            <person name="Mortimer M.A."/>
            <person name="Nielsen J."/>
            <person name="Oliver S.G."/>
            <person name="Olsthoorn M."/>
            <person name="Pal K."/>
            <person name="van Peij N.N.M.E."/>
            <person name="Ram A.F.J."/>
            <person name="Rinas U."/>
            <person name="Roubos J.A."/>
            <person name="Sagt C.M.J."/>
            <person name="Schmoll M."/>
            <person name="Sun J."/>
            <person name="Ussery D."/>
            <person name="Varga J."/>
            <person name="Vervecken W."/>
            <person name="van de Vondervoort P.J.J."/>
            <person name="Wedler H."/>
            <person name="Woesten H.A.B."/>
            <person name="Zeng A.-P."/>
            <person name="van Ooyen A.J.J."/>
            <person name="Visser J."/>
            <person name="Stam H."/>
        </authorList>
    </citation>
    <scope>NUCLEOTIDE SEQUENCE [LARGE SCALE GENOMIC DNA]</scope>
    <source>
        <strain>ATCC MYA-4892 / CBS 513.88 / FGSC A1513</strain>
    </source>
</reference>
<organism>
    <name type="scientific">Aspergillus niger (strain ATCC MYA-4892 / CBS 513.88 / FGSC A1513)</name>
    <dbReference type="NCBI Taxonomy" id="425011"/>
    <lineage>
        <taxon>Eukaryota</taxon>
        <taxon>Fungi</taxon>
        <taxon>Dikarya</taxon>
        <taxon>Ascomycota</taxon>
        <taxon>Pezizomycotina</taxon>
        <taxon>Eurotiomycetes</taxon>
        <taxon>Eurotiomycetidae</taxon>
        <taxon>Eurotiales</taxon>
        <taxon>Aspergillaceae</taxon>
        <taxon>Aspergillus</taxon>
        <taxon>Aspergillus subgen. Circumdati</taxon>
    </lineage>
</organism>
<keyword id="KW-1015">Disulfide bond</keyword>
<keyword id="KW-0378">Hydrolase</keyword>
<keyword id="KW-1185">Reference proteome</keyword>
<keyword id="KW-0964">Secreted</keyword>
<keyword id="KW-0719">Serine esterase</keyword>
<keyword id="KW-0732">Signal</keyword>
<sequence length="271" mass="27628">MKLPYFLLGLAGLAAASPMGLAERQLSDGNELRDGSCKPIIFIFARASTEPGLLGISTGPAVCNDLKMAKAGQVLCQGVGPAYTADLMSNALPDNTSPAAISESESLFKLAASKCPNSQILAGGYSQGTAVMDDSIKQLPDDVKDKIKGVVLFGYTRNAQEGGQIGNFPKDKVKIYCAMGDLVCDGTLIVTAAHFTYVMNTGEASQWLESKLSDTTTSSLTGSSSSDTSSSTSTGDSSSESSSAAGLGGLSGLTGLGSSTSGGFPSLASLF</sequence>
<feature type="signal peptide" evidence="4">
    <location>
        <begin position="1"/>
        <end position="16"/>
    </location>
</feature>
<feature type="chain" id="PRO_5000242393" description="Probable cutinase 2">
    <location>
        <begin position="17"/>
        <end position="271"/>
    </location>
</feature>
<feature type="region of interest" description="Disordered" evidence="6">
    <location>
        <begin position="216"/>
        <end position="245"/>
    </location>
</feature>
<feature type="active site" description="Nucleophile" evidence="5">
    <location>
        <position position="126"/>
    </location>
</feature>
<feature type="active site" evidence="5">
    <location>
        <position position="181"/>
    </location>
</feature>
<feature type="active site" description="Proton donor/acceptor" evidence="5">
    <location>
        <position position="194"/>
    </location>
</feature>
<feature type="site" description="Transition state stabilizer" evidence="1">
    <location>
        <position position="48"/>
    </location>
</feature>
<feature type="site" description="Transition state stabilizer" evidence="1">
    <location>
        <position position="127"/>
    </location>
</feature>
<feature type="disulfide bond" evidence="3">
    <location>
        <begin position="37"/>
        <end position="115"/>
    </location>
</feature>
<feature type="disulfide bond" evidence="3">
    <location>
        <begin position="63"/>
        <end position="76"/>
    </location>
</feature>
<feature type="disulfide bond" evidence="3">
    <location>
        <begin position="177"/>
        <end position="184"/>
    </location>
</feature>
<protein>
    <recommendedName>
        <fullName>Probable cutinase 2</fullName>
        <ecNumber evidence="5">3.1.1.74</ecNumber>
    </recommendedName>
    <alternativeName>
        <fullName>Cutin hydrolase 2</fullName>
    </alternativeName>
</protein>
<dbReference type="EC" id="3.1.1.74" evidence="5"/>
<dbReference type="EMBL" id="AM270218">
    <property type="protein sequence ID" value="CAK48244.1"/>
    <property type="molecule type" value="Genomic_DNA"/>
</dbReference>
<dbReference type="RefSeq" id="XP_001394015.1">
    <property type="nucleotide sequence ID" value="XM_001393978.1"/>
</dbReference>
<dbReference type="SMR" id="A5ABE6"/>
<dbReference type="ESTHER" id="aspnc-cuti2">
    <property type="family name" value="Cutinase"/>
</dbReference>
<dbReference type="EnsemblFungi" id="CAK48244">
    <property type="protein sequence ID" value="CAK48244"/>
    <property type="gene ID" value="An11g00110"/>
</dbReference>
<dbReference type="GeneID" id="4984242"/>
<dbReference type="KEGG" id="ang:An11g00110"/>
<dbReference type="VEuPathDB" id="FungiDB:An11g00110"/>
<dbReference type="HOGENOM" id="CLU_040058_2_0_1"/>
<dbReference type="Proteomes" id="UP000006706">
    <property type="component" value="Chromosome 7R"/>
</dbReference>
<dbReference type="GO" id="GO:0005576">
    <property type="term" value="C:extracellular region"/>
    <property type="evidence" value="ECO:0007669"/>
    <property type="project" value="UniProtKB-SubCell"/>
</dbReference>
<dbReference type="GO" id="GO:0050525">
    <property type="term" value="F:cutinase activity"/>
    <property type="evidence" value="ECO:0000250"/>
    <property type="project" value="UniProtKB"/>
</dbReference>
<dbReference type="GO" id="GO:0016052">
    <property type="term" value="P:carbohydrate catabolic process"/>
    <property type="evidence" value="ECO:0007669"/>
    <property type="project" value="TreeGrafter"/>
</dbReference>
<dbReference type="FunFam" id="3.40.50.1820:FF:000235">
    <property type="entry name" value="Cutinase 1"/>
    <property type="match status" value="1"/>
</dbReference>
<dbReference type="Gene3D" id="3.40.50.1820">
    <property type="entry name" value="alpha/beta hydrolase"/>
    <property type="match status" value="1"/>
</dbReference>
<dbReference type="InterPro" id="IPR029058">
    <property type="entry name" value="AB_hydrolase_fold"/>
</dbReference>
<dbReference type="InterPro" id="IPR000675">
    <property type="entry name" value="Cutinase/axe"/>
</dbReference>
<dbReference type="InterPro" id="IPR043579">
    <property type="entry name" value="CUTINASE_2"/>
</dbReference>
<dbReference type="InterPro" id="IPR011150">
    <property type="entry name" value="Cutinase_monf"/>
</dbReference>
<dbReference type="PANTHER" id="PTHR48250:SF3">
    <property type="entry name" value="CUTINASE 1-RELATED"/>
    <property type="match status" value="1"/>
</dbReference>
<dbReference type="PANTHER" id="PTHR48250">
    <property type="entry name" value="CUTINASE 2-RELATED"/>
    <property type="match status" value="1"/>
</dbReference>
<dbReference type="Pfam" id="PF01083">
    <property type="entry name" value="Cutinase"/>
    <property type="match status" value="1"/>
</dbReference>
<dbReference type="PRINTS" id="PR00129">
    <property type="entry name" value="CUTINASE"/>
</dbReference>
<dbReference type="SMART" id="SM01110">
    <property type="entry name" value="Cutinase"/>
    <property type="match status" value="1"/>
</dbReference>
<dbReference type="SUPFAM" id="SSF53474">
    <property type="entry name" value="alpha/beta-Hydrolases"/>
    <property type="match status" value="1"/>
</dbReference>
<dbReference type="PROSITE" id="PS00931">
    <property type="entry name" value="CUTINASE_2"/>
    <property type="match status" value="1"/>
</dbReference>
<name>CUTI2_ASPNC</name>
<evidence type="ECO:0000250" key="1">
    <source>
        <dbReference type="UniProtKB" id="P00590"/>
    </source>
</evidence>
<evidence type="ECO:0000250" key="2">
    <source>
        <dbReference type="UniProtKB" id="P11373"/>
    </source>
</evidence>
<evidence type="ECO:0000250" key="3">
    <source>
        <dbReference type="UniProtKB" id="P52956"/>
    </source>
</evidence>
<evidence type="ECO:0000255" key="4"/>
<evidence type="ECO:0000255" key="5">
    <source>
        <dbReference type="PROSITE-ProRule" id="PRU10109"/>
    </source>
</evidence>
<evidence type="ECO:0000256" key="6">
    <source>
        <dbReference type="SAM" id="MobiDB-lite"/>
    </source>
</evidence>
<evidence type="ECO:0000305" key="7"/>
<gene>
    <name type="ORF">An11g00110</name>
</gene>
<accession>A5ABE6</accession>
<proteinExistence type="inferred from homology"/>
<comment type="function">
    <text evidence="1">Catalyzes the hydrolysis of complex carboxylic polyesters found in the cell wall of plants (By similarity). Degrades cutin, a macromolecule that forms the structure of the plant cuticle (By similarity).</text>
</comment>
<comment type="catalytic activity">
    <reaction evidence="5">
        <text>cutin + H2O = cutin monomers.</text>
        <dbReference type="EC" id="3.1.1.74"/>
    </reaction>
</comment>
<comment type="subcellular location">
    <subcellularLocation>
        <location evidence="2">Secreted</location>
    </subcellularLocation>
</comment>
<comment type="similarity">
    <text evidence="7">Belongs to the cutinase family.</text>
</comment>